<feature type="chain" id="PRO_0000443415" description="Multidrug transporter TPO1_2">
    <location>
        <begin position="1"/>
        <end position="577"/>
    </location>
</feature>
<feature type="transmembrane region" description="Helical" evidence="1">
    <location>
        <begin position="137"/>
        <end position="157"/>
    </location>
</feature>
<feature type="transmembrane region" description="Helical" evidence="1">
    <location>
        <begin position="167"/>
        <end position="187"/>
    </location>
</feature>
<feature type="transmembrane region" description="Helical" evidence="1">
    <location>
        <begin position="204"/>
        <end position="224"/>
    </location>
</feature>
<feature type="transmembrane region" description="Helical" evidence="1">
    <location>
        <begin position="234"/>
        <end position="254"/>
    </location>
</feature>
<feature type="transmembrane region" description="Helical" evidence="1">
    <location>
        <begin position="263"/>
        <end position="283"/>
    </location>
</feature>
<feature type="transmembrane region" description="Helical" evidence="1">
    <location>
        <begin position="293"/>
        <end position="313"/>
    </location>
</feature>
<feature type="transmembrane region" description="Helical" evidence="1">
    <location>
        <begin position="368"/>
        <end position="388"/>
    </location>
</feature>
<feature type="transmembrane region" description="Helical" evidence="1">
    <location>
        <begin position="406"/>
        <end position="426"/>
    </location>
</feature>
<feature type="transmembrane region" description="Helical" evidence="1">
    <location>
        <begin position="446"/>
        <end position="466"/>
    </location>
</feature>
<feature type="transmembrane region" description="Helical" evidence="1">
    <location>
        <begin position="475"/>
        <end position="495"/>
    </location>
</feature>
<feature type="transmembrane region" description="Helical" evidence="1">
    <location>
        <begin position="504"/>
        <end position="526"/>
    </location>
</feature>
<feature type="transmembrane region" description="Helical" evidence="1">
    <location>
        <begin position="541"/>
        <end position="561"/>
    </location>
</feature>
<feature type="region of interest" description="Disordered" evidence="3">
    <location>
        <begin position="1"/>
        <end position="63"/>
    </location>
</feature>
<feature type="glycosylation site" description="N-linked (GlcNAc...) asparagine" evidence="2">
    <location>
        <position position="44"/>
    </location>
</feature>
<feature type="glycosylation site" description="N-linked (GlcNAc...) asparagine" evidence="2">
    <location>
        <position position="58"/>
    </location>
</feature>
<reference key="1">
    <citation type="journal article" date="2004" name="Nature">
        <title>Genome evolution in yeasts.</title>
        <authorList>
            <person name="Dujon B."/>
            <person name="Sherman D."/>
            <person name="Fischer G."/>
            <person name="Durrens P."/>
            <person name="Casaregola S."/>
            <person name="Lafontaine I."/>
            <person name="de Montigny J."/>
            <person name="Marck C."/>
            <person name="Neuveglise C."/>
            <person name="Talla E."/>
            <person name="Goffard N."/>
            <person name="Frangeul L."/>
            <person name="Aigle M."/>
            <person name="Anthouard V."/>
            <person name="Babour A."/>
            <person name="Barbe V."/>
            <person name="Barnay S."/>
            <person name="Blanchin S."/>
            <person name="Beckerich J.-M."/>
            <person name="Beyne E."/>
            <person name="Bleykasten C."/>
            <person name="Boisrame A."/>
            <person name="Boyer J."/>
            <person name="Cattolico L."/>
            <person name="Confanioleri F."/>
            <person name="de Daruvar A."/>
            <person name="Despons L."/>
            <person name="Fabre E."/>
            <person name="Fairhead C."/>
            <person name="Ferry-Dumazet H."/>
            <person name="Groppi A."/>
            <person name="Hantraye F."/>
            <person name="Hennequin C."/>
            <person name="Jauniaux N."/>
            <person name="Joyet P."/>
            <person name="Kachouri R."/>
            <person name="Kerrest A."/>
            <person name="Koszul R."/>
            <person name="Lemaire M."/>
            <person name="Lesur I."/>
            <person name="Ma L."/>
            <person name="Muller H."/>
            <person name="Nicaud J.-M."/>
            <person name="Nikolski M."/>
            <person name="Oztas S."/>
            <person name="Ozier-Kalogeropoulos O."/>
            <person name="Pellenz S."/>
            <person name="Potier S."/>
            <person name="Richard G.-F."/>
            <person name="Straub M.-L."/>
            <person name="Suleau A."/>
            <person name="Swennen D."/>
            <person name="Tekaia F."/>
            <person name="Wesolowski-Louvel M."/>
            <person name="Westhof E."/>
            <person name="Wirth B."/>
            <person name="Zeniou-Meyer M."/>
            <person name="Zivanovic Y."/>
            <person name="Bolotin-Fukuhara M."/>
            <person name="Thierry A."/>
            <person name="Bouchier C."/>
            <person name="Caudron B."/>
            <person name="Scarpelli C."/>
            <person name="Gaillardin C."/>
            <person name="Weissenbach J."/>
            <person name="Wincker P."/>
            <person name="Souciet J.-L."/>
        </authorList>
    </citation>
    <scope>NUCLEOTIDE SEQUENCE [LARGE SCALE GENOMIC DNA]</scope>
    <source>
        <strain>ATCC 2001 / BCRC 20586 / JCM 3761 / NBRC 0622 / NRRL Y-65 / CBS 138</strain>
    </source>
</reference>
<reference key="2">
    <citation type="journal article" date="2016" name="Mol. Cell. Proteomics">
        <title>Membrane proteome-wide response to the antifungal drug clotrimazole in Candida glabrata: role of the transcription factor CgPdr1 and the drug:H+ antiporters CgTpo1_1 and CgTpo1_2.</title>
        <authorList>
            <person name="Pais P."/>
            <person name="Costa C."/>
            <person name="Pires C."/>
            <person name="Shimizu K."/>
            <person name="Chibana H."/>
            <person name="Teixeira M.C."/>
        </authorList>
    </citation>
    <scope>DISRUPTION PHENOTYPE</scope>
    <scope>FUNCTION</scope>
    <scope>SUBCELLULAR LOCATION</scope>
    <scope>INDUCTION</scope>
</reference>
<reference key="3">
    <citation type="journal article" date="2017" name="Cell. Microbiol.">
        <title>The multidrug resistance transporters CgTpo1_1 and CgTpo1_2 play a role in virulence and biofilm formation in the human pathogen Candida glabrata.</title>
        <authorList>
            <person name="Santos R."/>
            <person name="Costa C."/>
            <person name="Mil-Homens D."/>
            <person name="Romao D."/>
            <person name="de Carvalho C.C."/>
            <person name="Pais P."/>
            <person name="Mira N.P."/>
            <person name="Fialho A.M."/>
            <person name="Teixeira M.C."/>
        </authorList>
    </citation>
    <scope>DISRUPTION PHENOTYPE</scope>
    <scope>FUNCTION</scope>
    <scope>INDUCTION</scope>
</reference>
<name>TPO12_CANGA</name>
<organism>
    <name type="scientific">Candida glabrata (strain ATCC 2001 / BCRC 20586 / JCM 3761 / NBRC 0622 / NRRL Y-65 / CBS 138)</name>
    <name type="common">Yeast</name>
    <name type="synonym">Nakaseomyces glabratus</name>
    <dbReference type="NCBI Taxonomy" id="284593"/>
    <lineage>
        <taxon>Eukaryota</taxon>
        <taxon>Fungi</taxon>
        <taxon>Dikarya</taxon>
        <taxon>Ascomycota</taxon>
        <taxon>Saccharomycotina</taxon>
        <taxon>Saccharomycetes</taxon>
        <taxon>Saccharomycetales</taxon>
        <taxon>Saccharomycetaceae</taxon>
        <taxon>Nakaseomyces</taxon>
    </lineage>
</organism>
<accession>Q6FV98</accession>
<sequence>MSSTSSDRPYDPLAPENEGVASSDVESTDSGEIRSYGPEEVLKNGSQIKDKGPALSKNSTQTSAVESAVAANRRLSKILTNTVDEPDVLEVDYSKCPPMGGGRPFPPTLPEKTQFEVTFDGPNDPLHPFNWPLRKKVMLCIILCLNCISITMGSSIFATGIRQICEIYHVIPVVAILGITLYVLGFAASPVIYAPLSEIYGRRGVLVISSFGFALFNFAVATAKDLQTIMICRFFAGFIGAAPLAVVPAAFADMFDTNIRGKAICLFSLGVFVGPILAPVIGSYITQHTTWRWLEYVIACFASAIFVAILFFFEESHHPSILVGKAKELRKLTGNWGIHAAHEDVELSVKEIAEKTITRPIIMLFTEPLLLIVTIYNSFVYGILYLLLEAYPIVFEQGYGFHTNGELPYISLIIGMAICGAFIWWMDEDYLRRYRKKGGLVPEARLLPMVVAGIVFPIGILWFCWTGNYPHKIHWIVPTIAGAFTGFGLIGIFLPCLNYIIESYLLIAASAVAANTFMRSGFGAAFPLFAGYMFNGMGVNYAGLLLGLLAVAMIPVPLLFLKYGPGIRKRSKYAYSL</sequence>
<keyword id="KW-1003">Cell membrane</keyword>
<keyword id="KW-0325">Glycoprotein</keyword>
<keyword id="KW-0472">Membrane</keyword>
<keyword id="KW-1185">Reference proteome</keyword>
<keyword id="KW-0812">Transmembrane</keyword>
<keyword id="KW-1133">Transmembrane helix</keyword>
<keyword id="KW-0813">Transport</keyword>
<proteinExistence type="evidence at transcript level"/>
<evidence type="ECO:0000255" key="1"/>
<evidence type="ECO:0000255" key="2">
    <source>
        <dbReference type="PROSITE-ProRule" id="PRU00498"/>
    </source>
</evidence>
<evidence type="ECO:0000256" key="3">
    <source>
        <dbReference type="SAM" id="MobiDB-lite"/>
    </source>
</evidence>
<evidence type="ECO:0000269" key="4">
    <source>
    </source>
</evidence>
<evidence type="ECO:0000269" key="5">
    <source>
    </source>
</evidence>
<evidence type="ECO:0000303" key="6">
    <source>
    </source>
</evidence>
<evidence type="ECO:0000305" key="7"/>
<gene>
    <name evidence="6" type="primary">TPO1_2</name>
    <name type="ordered locus">CAGL0E03674g</name>
</gene>
<protein>
    <recommendedName>
        <fullName evidence="6">Multidrug transporter TPO1_2</fullName>
    </recommendedName>
    <alternativeName>
        <fullName evidence="6">Clotrimazole exporter TPO1_2</fullName>
    </alternativeName>
    <alternativeName>
        <fullName evidence="6">Drug:H(+) antiporter TPO1_2</fullName>
        <shortName evidence="6">DHA TPO1_2</shortName>
    </alternativeName>
</protein>
<dbReference type="EMBL" id="CR380951">
    <property type="protein sequence ID" value="CAG58765.1"/>
    <property type="molecule type" value="Genomic_DNA"/>
</dbReference>
<dbReference type="RefSeq" id="XP_445846.1">
    <property type="nucleotide sequence ID" value="XM_445846.1"/>
</dbReference>
<dbReference type="SMR" id="Q6FV98"/>
<dbReference type="STRING" id="284593.Q6FV98"/>
<dbReference type="GlyCosmos" id="Q6FV98">
    <property type="glycosylation" value="2 sites, No reported glycans"/>
</dbReference>
<dbReference type="EnsemblFungi" id="CAGL0E03674g-T">
    <property type="protein sequence ID" value="CAGL0E03674g-T-p1"/>
    <property type="gene ID" value="CAGL0E03674g"/>
</dbReference>
<dbReference type="GeneID" id="2887382"/>
<dbReference type="KEGG" id="cgr:2887382"/>
<dbReference type="CGD" id="CAL0128758">
    <property type="gene designation" value="TPO1_2"/>
</dbReference>
<dbReference type="VEuPathDB" id="FungiDB:B1J91_E03674g"/>
<dbReference type="VEuPathDB" id="FungiDB:CAGL0E03674g"/>
<dbReference type="eggNOG" id="KOG0255">
    <property type="taxonomic scope" value="Eukaryota"/>
</dbReference>
<dbReference type="HOGENOM" id="CLU_008455_11_4_1"/>
<dbReference type="InParanoid" id="Q6FV98"/>
<dbReference type="OMA" id="AQNWPLR"/>
<dbReference type="PHI-base" id="PHI:6626"/>
<dbReference type="Proteomes" id="UP000002428">
    <property type="component" value="Chromosome E"/>
</dbReference>
<dbReference type="GO" id="GO:0005886">
    <property type="term" value="C:plasma membrane"/>
    <property type="evidence" value="ECO:0000314"/>
    <property type="project" value="CGD"/>
</dbReference>
<dbReference type="GO" id="GO:0022857">
    <property type="term" value="F:transmembrane transporter activity"/>
    <property type="evidence" value="ECO:0007669"/>
    <property type="project" value="InterPro"/>
</dbReference>
<dbReference type="GO" id="GO:0044010">
    <property type="term" value="P:single-species biofilm formation"/>
    <property type="evidence" value="ECO:0000315"/>
    <property type="project" value="CGD"/>
</dbReference>
<dbReference type="CDD" id="cd17323">
    <property type="entry name" value="MFS_Tpo1_MDR_like"/>
    <property type="match status" value="1"/>
</dbReference>
<dbReference type="FunFam" id="1.20.1250.20:FF:000011">
    <property type="entry name" value="MFS multidrug transporter, putative"/>
    <property type="match status" value="1"/>
</dbReference>
<dbReference type="Gene3D" id="1.20.1250.20">
    <property type="entry name" value="MFS general substrate transporter like domains"/>
    <property type="match status" value="1"/>
</dbReference>
<dbReference type="InterPro" id="IPR011701">
    <property type="entry name" value="MFS"/>
</dbReference>
<dbReference type="InterPro" id="IPR020846">
    <property type="entry name" value="MFS_dom"/>
</dbReference>
<dbReference type="InterPro" id="IPR036259">
    <property type="entry name" value="MFS_trans_sf"/>
</dbReference>
<dbReference type="PANTHER" id="PTHR23502">
    <property type="entry name" value="MAJOR FACILITATOR SUPERFAMILY"/>
    <property type="match status" value="1"/>
</dbReference>
<dbReference type="PANTHER" id="PTHR23502:SF31">
    <property type="entry name" value="POLYAMINE TRANSPORTER 1"/>
    <property type="match status" value="1"/>
</dbReference>
<dbReference type="Pfam" id="PF07690">
    <property type="entry name" value="MFS_1"/>
    <property type="match status" value="1"/>
</dbReference>
<dbReference type="SUPFAM" id="SSF103473">
    <property type="entry name" value="MFS general substrate transporter"/>
    <property type="match status" value="1"/>
</dbReference>
<dbReference type="PROSITE" id="PS50850">
    <property type="entry name" value="MFS"/>
    <property type="match status" value="1"/>
</dbReference>
<comment type="function">
    <text evidence="4 5">Multidrug resistance transporter involved in resistance to azole antifungal drugs such as the imidazoles miconazole, ketoconazole, and tioconazole; as well as the triazoles itraconazole and fluconazole (PubMed:26512119). Also plays a role in the resistance to other antifungal drug families such as the polyene amphotericin B, the pyrimide analog flucytosine, the fungicide mancozeb, and the polyamine spermine (PubMed:26512119). Decreases the intracellular accumulation of clotrimazole by mediating its extrusion from cells (PubMed:26512119). Plays a role in biofilm formation (PubMed:27780306).</text>
</comment>
<comment type="subcellular location">
    <subcellularLocation>
        <location evidence="4">Cell membrane</location>
        <topology evidence="1">Multi-pass membrane protein</topology>
    </subcellularLocation>
</comment>
<comment type="induction">
    <text evidence="4 5">Expression is up-regulated by clotrimazole (PubMed:26512119). Expression is also up-regulated during biofilm formation (PubMed:27780306).</text>
</comment>
<comment type="disruption phenotype">
    <text evidence="4 5">Leads to intracellular accumulation of clotrimazole and increases the susceptibility to clotrimazole but also to other imidazoles such as miconazole, ketoconazole, and tioconazole; as well as triazoles such as itraconazole and fluconazole (PubMed:26512119). Also increases susceptibility to other antifungal drug families such as the polyene amphotericin B, the pyrimide analog flucytosine, the fungicide mancozeb, and the polyamine spermine (PubMed:26512119). Decreases virulence in a Galleria mellonella model of infection, limits the survival when exposed to phagocytosis and impairs biofilm formation by decreasing the expression ofthe adhesin encoding genes ALS1, EAP1, and EPA1 (PubMed:27780306).</text>
</comment>
<comment type="similarity">
    <text evidence="7">Belongs to the major facilitator superfamily. DHA1 family. Polyamines/proton antiporter (TC 2.A.1.2.16) subfamily.</text>
</comment>